<sequence length="432" mass="48050">MQVSVETTQGLGRRVTITIAADSIETAVKSELVNVAKKVRIDGFRKGKVPMNIVAQRYGASVRQDVLGDLMSRNFVDAIIKEKINPAGAPNYVPGEYKVGEDFTYSVEFEVYPEVELTGLESIEVEKPVVEVTDADVDVMLDTLRKQQATWKEKDGAADAEDRVTIDFTGSVDGEEFEGGKATDFVLAMGQGRMIPGFEDGVKGHKAGEEFTIDVTFPEEYHAENLKGKAAKFVINLKKVEERELPELTEEFIKRFGVEDGSVAGLRAEVRKNMERELKGAVRNRVKSQAIEGLVKANDIDVPAALIDSEIDVLRRQAAQRFGGNEKQALELPRELFEEQAKRRVVVGLLLGEVIRTNELKADEERVKGLIEEMASAYEDPKEVIEFYSKNKELMDNMRNVALEEQAVEAVLAKAKVSEKATSFNELMNQQA</sequence>
<evidence type="ECO:0000255" key="1">
    <source>
        <dbReference type="HAMAP-Rule" id="MF_00303"/>
    </source>
</evidence>
<accession>B5FKV2</accession>
<keyword id="KW-0131">Cell cycle</keyword>
<keyword id="KW-0132">Cell division</keyword>
<keyword id="KW-0143">Chaperone</keyword>
<keyword id="KW-0963">Cytoplasm</keyword>
<keyword id="KW-0413">Isomerase</keyword>
<keyword id="KW-0697">Rotamase</keyword>
<proteinExistence type="inferred from homology"/>
<comment type="function">
    <text evidence="1">Involved in protein export. Acts as a chaperone by maintaining the newly synthesized protein in an open conformation. Functions as a peptidyl-prolyl cis-trans isomerase.</text>
</comment>
<comment type="catalytic activity">
    <reaction evidence="1">
        <text>[protein]-peptidylproline (omega=180) = [protein]-peptidylproline (omega=0)</text>
        <dbReference type="Rhea" id="RHEA:16237"/>
        <dbReference type="Rhea" id="RHEA-COMP:10747"/>
        <dbReference type="Rhea" id="RHEA-COMP:10748"/>
        <dbReference type="ChEBI" id="CHEBI:83833"/>
        <dbReference type="ChEBI" id="CHEBI:83834"/>
        <dbReference type="EC" id="5.2.1.8"/>
    </reaction>
</comment>
<comment type="subcellular location">
    <subcellularLocation>
        <location>Cytoplasm</location>
    </subcellularLocation>
    <text evidence="1">About half TF is bound to the ribosome near the polypeptide exit tunnel while the other half is free in the cytoplasm.</text>
</comment>
<comment type="domain">
    <text evidence="1">Consists of 3 domains; the N-terminus binds the ribosome, the middle domain has PPIase activity, while the C-terminus has intrinsic chaperone activity on its own.</text>
</comment>
<comment type="similarity">
    <text evidence="1">Belongs to the FKBP-type PPIase family. Tig subfamily.</text>
</comment>
<gene>
    <name evidence="1" type="primary">tig</name>
    <name type="ordered locus">SeD_A0489</name>
</gene>
<feature type="chain" id="PRO_1000115574" description="Trigger factor">
    <location>
        <begin position="1"/>
        <end position="432"/>
    </location>
</feature>
<feature type="domain" description="PPIase FKBP-type" evidence="1">
    <location>
        <begin position="161"/>
        <end position="246"/>
    </location>
</feature>
<organism>
    <name type="scientific">Salmonella dublin (strain CT_02021853)</name>
    <dbReference type="NCBI Taxonomy" id="439851"/>
    <lineage>
        <taxon>Bacteria</taxon>
        <taxon>Pseudomonadati</taxon>
        <taxon>Pseudomonadota</taxon>
        <taxon>Gammaproteobacteria</taxon>
        <taxon>Enterobacterales</taxon>
        <taxon>Enterobacteriaceae</taxon>
        <taxon>Salmonella</taxon>
    </lineage>
</organism>
<reference key="1">
    <citation type="journal article" date="2011" name="J. Bacteriol.">
        <title>Comparative genomics of 28 Salmonella enterica isolates: evidence for CRISPR-mediated adaptive sublineage evolution.</title>
        <authorList>
            <person name="Fricke W.F."/>
            <person name="Mammel M.K."/>
            <person name="McDermott P.F."/>
            <person name="Tartera C."/>
            <person name="White D.G."/>
            <person name="Leclerc J.E."/>
            <person name="Ravel J."/>
            <person name="Cebula T.A."/>
        </authorList>
    </citation>
    <scope>NUCLEOTIDE SEQUENCE [LARGE SCALE GENOMIC DNA]</scope>
    <source>
        <strain>CT_02021853</strain>
    </source>
</reference>
<dbReference type="EC" id="5.2.1.8" evidence="1"/>
<dbReference type="EMBL" id="CP001144">
    <property type="protein sequence ID" value="ACH76889.1"/>
    <property type="molecule type" value="Genomic_DNA"/>
</dbReference>
<dbReference type="RefSeq" id="WP_001198403.1">
    <property type="nucleotide sequence ID" value="NC_011205.1"/>
</dbReference>
<dbReference type="SMR" id="B5FKV2"/>
<dbReference type="KEGG" id="sed:SeD_A0489"/>
<dbReference type="HOGENOM" id="CLU_033058_2_0_6"/>
<dbReference type="Proteomes" id="UP000008322">
    <property type="component" value="Chromosome"/>
</dbReference>
<dbReference type="GO" id="GO:0005737">
    <property type="term" value="C:cytoplasm"/>
    <property type="evidence" value="ECO:0007669"/>
    <property type="project" value="UniProtKB-SubCell"/>
</dbReference>
<dbReference type="GO" id="GO:0003755">
    <property type="term" value="F:peptidyl-prolyl cis-trans isomerase activity"/>
    <property type="evidence" value="ECO:0007669"/>
    <property type="project" value="UniProtKB-UniRule"/>
</dbReference>
<dbReference type="GO" id="GO:0044183">
    <property type="term" value="F:protein folding chaperone"/>
    <property type="evidence" value="ECO:0007669"/>
    <property type="project" value="TreeGrafter"/>
</dbReference>
<dbReference type="GO" id="GO:0043022">
    <property type="term" value="F:ribosome binding"/>
    <property type="evidence" value="ECO:0007669"/>
    <property type="project" value="TreeGrafter"/>
</dbReference>
<dbReference type="GO" id="GO:0051083">
    <property type="term" value="P:'de novo' cotranslational protein folding"/>
    <property type="evidence" value="ECO:0007669"/>
    <property type="project" value="TreeGrafter"/>
</dbReference>
<dbReference type="GO" id="GO:0051301">
    <property type="term" value="P:cell division"/>
    <property type="evidence" value="ECO:0007669"/>
    <property type="project" value="UniProtKB-KW"/>
</dbReference>
<dbReference type="GO" id="GO:0061077">
    <property type="term" value="P:chaperone-mediated protein folding"/>
    <property type="evidence" value="ECO:0007669"/>
    <property type="project" value="TreeGrafter"/>
</dbReference>
<dbReference type="GO" id="GO:0015031">
    <property type="term" value="P:protein transport"/>
    <property type="evidence" value="ECO:0007669"/>
    <property type="project" value="UniProtKB-UniRule"/>
</dbReference>
<dbReference type="GO" id="GO:0043335">
    <property type="term" value="P:protein unfolding"/>
    <property type="evidence" value="ECO:0007669"/>
    <property type="project" value="TreeGrafter"/>
</dbReference>
<dbReference type="FunFam" id="1.10.3120.10:FF:000001">
    <property type="entry name" value="Trigger factor"/>
    <property type="match status" value="1"/>
</dbReference>
<dbReference type="FunFam" id="3.10.50.40:FF:000001">
    <property type="entry name" value="Trigger factor"/>
    <property type="match status" value="1"/>
</dbReference>
<dbReference type="FunFam" id="3.30.70.1050:FF:000001">
    <property type="entry name" value="Trigger factor"/>
    <property type="match status" value="1"/>
</dbReference>
<dbReference type="Gene3D" id="3.10.50.40">
    <property type="match status" value="1"/>
</dbReference>
<dbReference type="Gene3D" id="3.30.70.1050">
    <property type="entry name" value="Trigger factor ribosome-binding domain"/>
    <property type="match status" value="1"/>
</dbReference>
<dbReference type="Gene3D" id="1.10.3120.10">
    <property type="entry name" value="Trigger factor, C-terminal domain"/>
    <property type="match status" value="1"/>
</dbReference>
<dbReference type="HAMAP" id="MF_00303">
    <property type="entry name" value="Trigger_factor_Tig"/>
    <property type="match status" value="1"/>
</dbReference>
<dbReference type="InterPro" id="IPR046357">
    <property type="entry name" value="PPIase_dom_sf"/>
</dbReference>
<dbReference type="InterPro" id="IPR001179">
    <property type="entry name" value="PPIase_FKBP_dom"/>
</dbReference>
<dbReference type="InterPro" id="IPR005215">
    <property type="entry name" value="Trig_fac"/>
</dbReference>
<dbReference type="InterPro" id="IPR008880">
    <property type="entry name" value="Trigger_fac_C"/>
</dbReference>
<dbReference type="InterPro" id="IPR037041">
    <property type="entry name" value="Trigger_fac_C_sf"/>
</dbReference>
<dbReference type="InterPro" id="IPR008881">
    <property type="entry name" value="Trigger_fac_ribosome-bd_bac"/>
</dbReference>
<dbReference type="InterPro" id="IPR036611">
    <property type="entry name" value="Trigger_fac_ribosome-bd_sf"/>
</dbReference>
<dbReference type="InterPro" id="IPR027304">
    <property type="entry name" value="Trigger_fact/SurA_dom_sf"/>
</dbReference>
<dbReference type="NCBIfam" id="TIGR00115">
    <property type="entry name" value="tig"/>
    <property type="match status" value="1"/>
</dbReference>
<dbReference type="PANTHER" id="PTHR30560">
    <property type="entry name" value="TRIGGER FACTOR CHAPERONE AND PEPTIDYL-PROLYL CIS/TRANS ISOMERASE"/>
    <property type="match status" value="1"/>
</dbReference>
<dbReference type="PANTHER" id="PTHR30560:SF3">
    <property type="entry name" value="TRIGGER FACTOR-LIKE PROTEIN TIG, CHLOROPLASTIC"/>
    <property type="match status" value="1"/>
</dbReference>
<dbReference type="Pfam" id="PF00254">
    <property type="entry name" value="FKBP_C"/>
    <property type="match status" value="1"/>
</dbReference>
<dbReference type="Pfam" id="PF05698">
    <property type="entry name" value="Trigger_C"/>
    <property type="match status" value="1"/>
</dbReference>
<dbReference type="Pfam" id="PF05697">
    <property type="entry name" value="Trigger_N"/>
    <property type="match status" value="1"/>
</dbReference>
<dbReference type="PIRSF" id="PIRSF003095">
    <property type="entry name" value="Trigger_factor"/>
    <property type="match status" value="1"/>
</dbReference>
<dbReference type="SUPFAM" id="SSF54534">
    <property type="entry name" value="FKBP-like"/>
    <property type="match status" value="1"/>
</dbReference>
<dbReference type="SUPFAM" id="SSF109998">
    <property type="entry name" value="Triger factor/SurA peptide-binding domain-like"/>
    <property type="match status" value="1"/>
</dbReference>
<dbReference type="SUPFAM" id="SSF102735">
    <property type="entry name" value="Trigger factor ribosome-binding domain"/>
    <property type="match status" value="1"/>
</dbReference>
<dbReference type="PROSITE" id="PS50059">
    <property type="entry name" value="FKBP_PPIASE"/>
    <property type="match status" value="1"/>
</dbReference>
<protein>
    <recommendedName>
        <fullName evidence="1">Trigger factor</fullName>
        <shortName evidence="1">TF</shortName>
        <ecNumber evidence="1">5.2.1.8</ecNumber>
    </recommendedName>
    <alternativeName>
        <fullName evidence="1">PPIase</fullName>
    </alternativeName>
</protein>
<name>TIG_SALDC</name>